<feature type="signal peptide" evidence="1">
    <location>
        <begin position="1"/>
        <end position="23"/>
    </location>
</feature>
<feature type="chain" id="PRO_0000021374" description="Glycine-rich cell wall structural protein">
    <location>
        <begin position="24"/>
        <end position="349"/>
    </location>
</feature>
<protein>
    <recommendedName>
        <fullName>Glycine-rich cell wall structural protein</fullName>
    </recommendedName>
</protein>
<keyword id="KW-0134">Cell wall</keyword>
<keyword id="KW-0961">Cell wall biogenesis/degradation</keyword>
<keyword id="KW-1185">Reference proteome</keyword>
<keyword id="KW-0677">Repeat</keyword>
<keyword id="KW-0964">Secreted</keyword>
<keyword id="KW-0732">Signal</keyword>
<sequence>MGKVSFGFLGLMLVVVVIGVVECRRFEKETLGGGGGGGLGGGFGGGKGFGGGIGAGGGFGGGAGGGAGGGLGGGAGGGGGIGGGAGGGAGGGLGGGAGGGLGGGHGGGIGGGAGGGAGGGLGGGHGGGIGGGAGGGSGGGLGGGIGGGAGGGAGGGGGLGGGHGGGIGGGAGGGAGGGLGGGHGGGIGGGAGGGSGGGLGGGIGGGAGGGAGGGGGAGGGGGLGGGHGGGFGGGAGGGLGGGAGGGTGGGFGGGAGGGAGGGAGGGFGGGAGGGAGGGFGGGAGGGAGGGAGGGFGGGAGGGHGGGVGGGFGGGSGGGFGGGAGGGAGGGAGGGFGGGGGAGGGFGGGF</sequence>
<comment type="function">
    <text evidence="2">Responsible for plasticity of the cell wall.</text>
</comment>
<comment type="subcellular location">
    <subcellularLocation>
        <location evidence="2">Secreted</location>
        <location evidence="2">Cell wall</location>
    </subcellularLocation>
</comment>
<comment type="sequence caution" evidence="2">
    <conflict type="erroneous initiation">
        <sequence resource="EMBL-CDS" id="CAA41249"/>
    </conflict>
</comment>
<name>GRP1_ARATH</name>
<proteinExistence type="inferred from homology"/>
<accession>P27483</accession>
<accession>Q9LSP2</accession>
<reference key="1">
    <citation type="journal article" date="1991" name="Plant Mol. Biol.">
        <title>Nucleotide sequence and expression of a novel glycine-rich protein gene from Arabidopsis thaliana.</title>
        <authorList>
            <person name="Quigley F."/>
            <person name="Villiot M.L."/>
            <person name="Mache R."/>
        </authorList>
    </citation>
    <scope>NUCLEOTIDE SEQUENCE [GENOMIC DNA]</scope>
    <source>
        <strain>cv. Columbia</strain>
    </source>
</reference>
<reference key="2">
    <citation type="journal article" date="2000" name="DNA Res.">
        <title>Structural analysis of Arabidopsis thaliana chromosome 3. I. Sequence features of the regions of 4,504,864 bp covered by sixty P1 and TAC clones.</title>
        <authorList>
            <person name="Sato S."/>
            <person name="Nakamura Y."/>
            <person name="Kaneko T."/>
            <person name="Katoh T."/>
            <person name="Asamizu E."/>
            <person name="Tabata S."/>
        </authorList>
    </citation>
    <scope>NUCLEOTIDE SEQUENCE [LARGE SCALE GENOMIC DNA]</scope>
    <source>
        <strain>cv. Columbia</strain>
    </source>
</reference>
<reference key="3">
    <citation type="journal article" date="2017" name="Plant J.">
        <title>Araport11: a complete reannotation of the Arabidopsis thaliana reference genome.</title>
        <authorList>
            <person name="Cheng C.Y."/>
            <person name="Krishnakumar V."/>
            <person name="Chan A.P."/>
            <person name="Thibaud-Nissen F."/>
            <person name="Schobel S."/>
            <person name="Town C.D."/>
        </authorList>
    </citation>
    <scope>GENOME REANNOTATION</scope>
    <source>
        <strain>cv. Columbia</strain>
    </source>
</reference>
<evidence type="ECO:0000255" key="1"/>
<evidence type="ECO:0000305" key="2"/>
<gene>
    <name type="ordered locus">At3g17050</name>
    <name type="ORF">K14A17.12</name>
</gene>
<dbReference type="EMBL" id="X58338">
    <property type="protein sequence ID" value="CAA41249.1"/>
    <property type="status" value="ALT_INIT"/>
    <property type="molecule type" value="Genomic_DNA"/>
</dbReference>
<dbReference type="EMBL" id="AB026636">
    <property type="protein sequence ID" value="BAA94983.1"/>
    <property type="molecule type" value="Genomic_DNA"/>
</dbReference>
<dbReference type="EMBL" id="CP002686">
    <property type="status" value="NOT_ANNOTATED_CDS"/>
    <property type="molecule type" value="Genomic_DNA"/>
</dbReference>
<dbReference type="PIR" id="S17732">
    <property type="entry name" value="KNMU"/>
</dbReference>
<dbReference type="STRING" id="3702.P27483"/>
<dbReference type="PeptideAtlas" id="P27483"/>
<dbReference type="Araport" id="AT3G17050"/>
<dbReference type="TAIR" id="AT3G17050"/>
<dbReference type="InParanoid" id="P27483"/>
<dbReference type="PRO" id="PR:P27483"/>
<dbReference type="Proteomes" id="UP000006548">
    <property type="component" value="Chromosome 3"/>
</dbReference>
<dbReference type="GO" id="GO:0005576">
    <property type="term" value="C:extracellular region"/>
    <property type="evidence" value="ECO:0007669"/>
    <property type="project" value="UniProtKB-KW"/>
</dbReference>
<dbReference type="GO" id="GO:0071555">
    <property type="term" value="P:cell wall organization"/>
    <property type="evidence" value="ECO:0007669"/>
    <property type="project" value="UniProtKB-KW"/>
</dbReference>
<organism>
    <name type="scientific">Arabidopsis thaliana</name>
    <name type="common">Mouse-ear cress</name>
    <dbReference type="NCBI Taxonomy" id="3702"/>
    <lineage>
        <taxon>Eukaryota</taxon>
        <taxon>Viridiplantae</taxon>
        <taxon>Streptophyta</taxon>
        <taxon>Embryophyta</taxon>
        <taxon>Tracheophyta</taxon>
        <taxon>Spermatophyta</taxon>
        <taxon>Magnoliopsida</taxon>
        <taxon>eudicotyledons</taxon>
        <taxon>Gunneridae</taxon>
        <taxon>Pentapetalae</taxon>
        <taxon>rosids</taxon>
        <taxon>malvids</taxon>
        <taxon>Brassicales</taxon>
        <taxon>Brassicaceae</taxon>
        <taxon>Camelineae</taxon>
        <taxon>Arabidopsis</taxon>
    </lineage>
</organism>